<gene>
    <name type="ordered locus">SPy_0397</name>
    <name type="ordered locus">M5005_Spy0329</name>
</gene>
<accession>P60419</accession>
<accession>Q490M0</accession>
<accession>Q9A191</accession>
<sequence length="91" mass="11103">MFQKQERIGLVVYLYYNRDARKLSKFGDLYYHSKRSRYLIIYINKNDLDTKLEEMRRLKCVKDIRPSAFDDIDRQFVGNLHRDETNNHQKG</sequence>
<comment type="subcellular location">
    <subcellularLocation>
        <location evidence="1">Cytoplasm</location>
    </subcellularLocation>
</comment>
<comment type="similarity">
    <text evidence="1">Belongs to the UPF0298 family.</text>
</comment>
<keyword id="KW-0963">Cytoplasm</keyword>
<keyword id="KW-1185">Reference proteome</keyword>
<reference key="1">
    <citation type="journal article" date="2001" name="Proc. Natl. Acad. Sci. U.S.A.">
        <title>Complete genome sequence of an M1 strain of Streptococcus pyogenes.</title>
        <authorList>
            <person name="Ferretti J.J."/>
            <person name="McShan W.M."/>
            <person name="Ajdic D.J."/>
            <person name="Savic D.J."/>
            <person name="Savic G."/>
            <person name="Lyon K."/>
            <person name="Primeaux C."/>
            <person name="Sezate S."/>
            <person name="Suvorov A.N."/>
            <person name="Kenton S."/>
            <person name="Lai H.S."/>
            <person name="Lin S.P."/>
            <person name="Qian Y."/>
            <person name="Jia H.G."/>
            <person name="Najar F.Z."/>
            <person name="Ren Q."/>
            <person name="Zhu H."/>
            <person name="Song L."/>
            <person name="White J."/>
            <person name="Yuan X."/>
            <person name="Clifton S.W."/>
            <person name="Roe B.A."/>
            <person name="McLaughlin R.E."/>
        </authorList>
    </citation>
    <scope>NUCLEOTIDE SEQUENCE [LARGE SCALE GENOMIC DNA]</scope>
    <source>
        <strain>ATCC 700294 / SF370 / Serotype M1</strain>
    </source>
</reference>
<reference key="2">
    <citation type="journal article" date="2005" name="J. Infect. Dis.">
        <title>Evolutionary origin and emergence of a highly successful clone of serotype M1 group A Streptococcus involved multiple horizontal gene transfer events.</title>
        <authorList>
            <person name="Sumby P."/>
            <person name="Porcella S.F."/>
            <person name="Madrigal A.G."/>
            <person name="Barbian K.D."/>
            <person name="Virtaneva K."/>
            <person name="Ricklefs S.M."/>
            <person name="Sturdevant D.E."/>
            <person name="Graham M.R."/>
            <person name="Vuopio-Varkila J."/>
            <person name="Hoe N.P."/>
            <person name="Musser J.M."/>
        </authorList>
    </citation>
    <scope>NUCLEOTIDE SEQUENCE [LARGE SCALE GENOMIC DNA]</scope>
    <source>
        <strain>ATCC BAA-947 / MGAS5005 / Serotype M1</strain>
    </source>
</reference>
<feature type="chain" id="PRO_0000074678" description="UPF0298 protein SPy_0397/M5005_Spy0329">
    <location>
        <begin position="1"/>
        <end position="91"/>
    </location>
</feature>
<dbReference type="EMBL" id="AE004092">
    <property type="protein sequence ID" value="AAK33433.1"/>
    <property type="molecule type" value="Genomic_DNA"/>
</dbReference>
<dbReference type="EMBL" id="CP000017">
    <property type="protein sequence ID" value="AAZ50948.1"/>
    <property type="molecule type" value="Genomic_DNA"/>
</dbReference>
<dbReference type="RefSeq" id="NP_268712.1">
    <property type="nucleotide sequence ID" value="NC_002737.2"/>
</dbReference>
<dbReference type="SMR" id="P60419"/>
<dbReference type="PaxDb" id="1314-HKU360_00367"/>
<dbReference type="KEGG" id="spy:SPy_0397"/>
<dbReference type="KEGG" id="spz:M5005_Spy0329"/>
<dbReference type="PATRIC" id="fig|160490.10.peg.340"/>
<dbReference type="HOGENOM" id="CLU_159890_1_0_9"/>
<dbReference type="OMA" id="VRISHIK"/>
<dbReference type="Proteomes" id="UP000000750">
    <property type="component" value="Chromosome"/>
</dbReference>
<dbReference type="GO" id="GO:0005737">
    <property type="term" value="C:cytoplasm"/>
    <property type="evidence" value="ECO:0007669"/>
    <property type="project" value="UniProtKB-SubCell"/>
</dbReference>
<dbReference type="HAMAP" id="MF_01126">
    <property type="entry name" value="UPF0298"/>
    <property type="match status" value="1"/>
</dbReference>
<dbReference type="InterPro" id="IPR016979">
    <property type="entry name" value="DUF2129"/>
</dbReference>
<dbReference type="NCBIfam" id="NF002631">
    <property type="entry name" value="PRK02302.1"/>
    <property type="match status" value="1"/>
</dbReference>
<dbReference type="Pfam" id="PF09902">
    <property type="entry name" value="DUF2129"/>
    <property type="match status" value="1"/>
</dbReference>
<dbReference type="PIRSF" id="PIRSF031653">
    <property type="entry name" value="UCP031653"/>
    <property type="match status" value="1"/>
</dbReference>
<protein>
    <recommendedName>
        <fullName evidence="1">UPF0298 protein SPy_0397/M5005_Spy0329</fullName>
    </recommendedName>
</protein>
<evidence type="ECO:0000255" key="1">
    <source>
        <dbReference type="HAMAP-Rule" id="MF_01126"/>
    </source>
</evidence>
<organism>
    <name type="scientific">Streptococcus pyogenes serotype M1</name>
    <dbReference type="NCBI Taxonomy" id="301447"/>
    <lineage>
        <taxon>Bacteria</taxon>
        <taxon>Bacillati</taxon>
        <taxon>Bacillota</taxon>
        <taxon>Bacilli</taxon>
        <taxon>Lactobacillales</taxon>
        <taxon>Streptococcaceae</taxon>
        <taxon>Streptococcus</taxon>
    </lineage>
</organism>
<name>Y397_STRP1</name>
<proteinExistence type="inferred from homology"/>